<proteinExistence type="inferred from homology"/>
<name>MNMA_DICNV</name>
<dbReference type="EC" id="2.8.1.13" evidence="1"/>
<dbReference type="EMBL" id="CP000513">
    <property type="protein sequence ID" value="ABQ13164.1"/>
    <property type="molecule type" value="Genomic_DNA"/>
</dbReference>
<dbReference type="RefSeq" id="WP_012030960.1">
    <property type="nucleotide sequence ID" value="NC_009446.1"/>
</dbReference>
<dbReference type="SMR" id="A5EVB4"/>
<dbReference type="STRING" id="246195.DNO_0627"/>
<dbReference type="KEGG" id="dno:DNO_0627"/>
<dbReference type="eggNOG" id="COG0482">
    <property type="taxonomic scope" value="Bacteria"/>
</dbReference>
<dbReference type="HOGENOM" id="CLU_035188_1_0_6"/>
<dbReference type="OrthoDB" id="9800696at2"/>
<dbReference type="Proteomes" id="UP000000248">
    <property type="component" value="Chromosome"/>
</dbReference>
<dbReference type="GO" id="GO:0005737">
    <property type="term" value="C:cytoplasm"/>
    <property type="evidence" value="ECO:0007669"/>
    <property type="project" value="UniProtKB-SubCell"/>
</dbReference>
<dbReference type="GO" id="GO:0005524">
    <property type="term" value="F:ATP binding"/>
    <property type="evidence" value="ECO:0007669"/>
    <property type="project" value="UniProtKB-KW"/>
</dbReference>
<dbReference type="GO" id="GO:0000049">
    <property type="term" value="F:tRNA binding"/>
    <property type="evidence" value="ECO:0007669"/>
    <property type="project" value="UniProtKB-KW"/>
</dbReference>
<dbReference type="GO" id="GO:0103016">
    <property type="term" value="F:tRNA-uridine 2-sulfurtransferase activity"/>
    <property type="evidence" value="ECO:0007669"/>
    <property type="project" value="UniProtKB-EC"/>
</dbReference>
<dbReference type="GO" id="GO:0002143">
    <property type="term" value="P:tRNA wobble position uridine thiolation"/>
    <property type="evidence" value="ECO:0007669"/>
    <property type="project" value="TreeGrafter"/>
</dbReference>
<dbReference type="CDD" id="cd01998">
    <property type="entry name" value="MnmA_TRMU-like"/>
    <property type="match status" value="1"/>
</dbReference>
<dbReference type="FunFam" id="2.30.30.280:FF:000001">
    <property type="entry name" value="tRNA-specific 2-thiouridylase MnmA"/>
    <property type="match status" value="1"/>
</dbReference>
<dbReference type="FunFam" id="2.40.30.10:FF:000023">
    <property type="entry name" value="tRNA-specific 2-thiouridylase MnmA"/>
    <property type="match status" value="1"/>
</dbReference>
<dbReference type="FunFam" id="3.40.50.620:FF:000004">
    <property type="entry name" value="tRNA-specific 2-thiouridylase MnmA"/>
    <property type="match status" value="1"/>
</dbReference>
<dbReference type="Gene3D" id="2.30.30.280">
    <property type="entry name" value="Adenine nucleotide alpha hydrolases-like domains"/>
    <property type="match status" value="1"/>
</dbReference>
<dbReference type="Gene3D" id="3.40.50.620">
    <property type="entry name" value="HUPs"/>
    <property type="match status" value="1"/>
</dbReference>
<dbReference type="Gene3D" id="2.40.30.10">
    <property type="entry name" value="Translation factors"/>
    <property type="match status" value="1"/>
</dbReference>
<dbReference type="HAMAP" id="MF_00144">
    <property type="entry name" value="tRNA_thiouridyl_MnmA"/>
    <property type="match status" value="1"/>
</dbReference>
<dbReference type="InterPro" id="IPR004506">
    <property type="entry name" value="MnmA-like"/>
</dbReference>
<dbReference type="InterPro" id="IPR046885">
    <property type="entry name" value="MnmA-like_C"/>
</dbReference>
<dbReference type="InterPro" id="IPR046884">
    <property type="entry name" value="MnmA-like_central"/>
</dbReference>
<dbReference type="InterPro" id="IPR023382">
    <property type="entry name" value="MnmA-like_central_sf"/>
</dbReference>
<dbReference type="InterPro" id="IPR014729">
    <property type="entry name" value="Rossmann-like_a/b/a_fold"/>
</dbReference>
<dbReference type="NCBIfam" id="NF001138">
    <property type="entry name" value="PRK00143.1"/>
    <property type="match status" value="1"/>
</dbReference>
<dbReference type="NCBIfam" id="TIGR00420">
    <property type="entry name" value="trmU"/>
    <property type="match status" value="1"/>
</dbReference>
<dbReference type="PANTHER" id="PTHR11933:SF5">
    <property type="entry name" value="MITOCHONDRIAL TRNA-SPECIFIC 2-THIOURIDYLASE 1"/>
    <property type="match status" value="1"/>
</dbReference>
<dbReference type="PANTHER" id="PTHR11933">
    <property type="entry name" value="TRNA 5-METHYLAMINOMETHYL-2-THIOURIDYLATE -METHYLTRANSFERASE"/>
    <property type="match status" value="1"/>
</dbReference>
<dbReference type="Pfam" id="PF03054">
    <property type="entry name" value="tRNA_Me_trans"/>
    <property type="match status" value="1"/>
</dbReference>
<dbReference type="Pfam" id="PF20258">
    <property type="entry name" value="tRNA_Me_trans_C"/>
    <property type="match status" value="1"/>
</dbReference>
<dbReference type="Pfam" id="PF20259">
    <property type="entry name" value="tRNA_Me_trans_M"/>
    <property type="match status" value="1"/>
</dbReference>
<dbReference type="SUPFAM" id="SSF52402">
    <property type="entry name" value="Adenine nucleotide alpha hydrolases-like"/>
    <property type="match status" value="1"/>
</dbReference>
<reference key="1">
    <citation type="journal article" date="2007" name="Nat. Biotechnol.">
        <title>Genome sequence and identification of candidate vaccine antigens from the animal pathogen Dichelobacter nodosus.</title>
        <authorList>
            <person name="Myers G.S.A."/>
            <person name="Parker D."/>
            <person name="Al-Hasani K."/>
            <person name="Kennan R.M."/>
            <person name="Seemann T."/>
            <person name="Ren Q."/>
            <person name="Badger J.H."/>
            <person name="Selengut J.D."/>
            <person name="Deboy R.T."/>
            <person name="Tettelin H."/>
            <person name="Boyce J.D."/>
            <person name="McCarl V.P."/>
            <person name="Han X."/>
            <person name="Nelson W.C."/>
            <person name="Madupu R."/>
            <person name="Mohamoud Y."/>
            <person name="Holley T."/>
            <person name="Fedorova N."/>
            <person name="Khouri H."/>
            <person name="Bottomley S.P."/>
            <person name="Whittington R.J."/>
            <person name="Adler B."/>
            <person name="Songer J.G."/>
            <person name="Rood J.I."/>
            <person name="Paulsen I.T."/>
        </authorList>
    </citation>
    <scope>NUCLEOTIDE SEQUENCE [LARGE SCALE GENOMIC DNA]</scope>
    <source>
        <strain>VCS1703A</strain>
    </source>
</reference>
<comment type="function">
    <text evidence="1">Catalyzes the 2-thiolation of uridine at the wobble position (U34) of tRNA, leading to the formation of s(2)U34.</text>
</comment>
<comment type="catalytic activity">
    <reaction evidence="1">
        <text>S-sulfanyl-L-cysteinyl-[protein] + uridine(34) in tRNA + AH2 + ATP = 2-thiouridine(34) in tRNA + L-cysteinyl-[protein] + A + AMP + diphosphate + H(+)</text>
        <dbReference type="Rhea" id="RHEA:47032"/>
        <dbReference type="Rhea" id="RHEA-COMP:10131"/>
        <dbReference type="Rhea" id="RHEA-COMP:11726"/>
        <dbReference type="Rhea" id="RHEA-COMP:11727"/>
        <dbReference type="Rhea" id="RHEA-COMP:11728"/>
        <dbReference type="ChEBI" id="CHEBI:13193"/>
        <dbReference type="ChEBI" id="CHEBI:15378"/>
        <dbReference type="ChEBI" id="CHEBI:17499"/>
        <dbReference type="ChEBI" id="CHEBI:29950"/>
        <dbReference type="ChEBI" id="CHEBI:30616"/>
        <dbReference type="ChEBI" id="CHEBI:33019"/>
        <dbReference type="ChEBI" id="CHEBI:61963"/>
        <dbReference type="ChEBI" id="CHEBI:65315"/>
        <dbReference type="ChEBI" id="CHEBI:87170"/>
        <dbReference type="ChEBI" id="CHEBI:456215"/>
        <dbReference type="EC" id="2.8.1.13"/>
    </reaction>
</comment>
<comment type="subcellular location">
    <subcellularLocation>
        <location evidence="1">Cytoplasm</location>
    </subcellularLocation>
</comment>
<comment type="similarity">
    <text evidence="1">Belongs to the MnmA/TRMU family.</text>
</comment>
<feature type="chain" id="PRO_0000349618" description="tRNA-specific 2-thiouridylase MnmA">
    <location>
        <begin position="1"/>
        <end position="376"/>
    </location>
</feature>
<feature type="region of interest" description="Interaction with target base in tRNA" evidence="1">
    <location>
        <begin position="103"/>
        <end position="105"/>
    </location>
</feature>
<feature type="region of interest" description="Interaction with tRNA" evidence="1">
    <location>
        <begin position="155"/>
        <end position="157"/>
    </location>
</feature>
<feature type="region of interest" description="Interaction with tRNA" evidence="1">
    <location>
        <begin position="315"/>
        <end position="316"/>
    </location>
</feature>
<feature type="active site" description="Nucleophile" evidence="1">
    <location>
        <position position="108"/>
    </location>
</feature>
<feature type="active site" description="Cysteine persulfide intermediate" evidence="1">
    <location>
        <position position="205"/>
    </location>
</feature>
<feature type="binding site" evidence="1">
    <location>
        <begin position="17"/>
        <end position="24"/>
    </location>
    <ligand>
        <name>ATP</name>
        <dbReference type="ChEBI" id="CHEBI:30616"/>
    </ligand>
</feature>
<feature type="binding site" evidence="1">
    <location>
        <position position="43"/>
    </location>
    <ligand>
        <name>ATP</name>
        <dbReference type="ChEBI" id="CHEBI:30616"/>
    </ligand>
</feature>
<feature type="binding site" evidence="1">
    <location>
        <position position="132"/>
    </location>
    <ligand>
        <name>ATP</name>
        <dbReference type="ChEBI" id="CHEBI:30616"/>
    </ligand>
</feature>
<feature type="site" description="Interaction with tRNA" evidence="1">
    <location>
        <position position="133"/>
    </location>
</feature>
<feature type="site" description="Interaction with tRNA" evidence="1">
    <location>
        <position position="348"/>
    </location>
</feature>
<feature type="disulfide bond" description="Alternate" evidence="1">
    <location>
        <begin position="108"/>
        <end position="205"/>
    </location>
</feature>
<protein>
    <recommendedName>
        <fullName evidence="1">tRNA-specific 2-thiouridylase MnmA</fullName>
        <ecNumber evidence="1">2.8.1.13</ecNumber>
    </recommendedName>
</protein>
<gene>
    <name evidence="1" type="primary">mnmA</name>
    <name type="ordered locus">DNO_0627</name>
</gene>
<evidence type="ECO:0000255" key="1">
    <source>
        <dbReference type="HAMAP-Rule" id="MF_00144"/>
    </source>
</evidence>
<sequence length="376" mass="41987">MAFVPFQAPQGSTIAVGMSGGVDSSVTAYLLKKQGYDVFGIFMKNWEETFSSGYCSAAEDLEDARDVCQTLDIPLHTVNFVQQYHDRVFQLFLDEYRAGRTPNPDVLCNREIKFAELALYAQQLGADFLATGHYAQRLQSDNHEAALFKGVDAQKDQSYFLHQITPAQLNKAIFPLGGLQKKQVRAIARERGLTTFDKKDSTGICFIGERPFRAFLQQYLPAQKGLMKTPNGEIVGEHMGLMYYTIGQRQGLGIGGIAGASEEPWYVLEKDLSNNVLIVGQGDHPLLYHRVLIAGQLSWLNEAPIAGRFYHAKTRYRQSDQKCRVDYAADGRLQLTFEQLQRAITLGQYAVIYDGERCLGGGVIEARMQGKQDVSS</sequence>
<organism>
    <name type="scientific">Dichelobacter nodosus (strain VCS1703A)</name>
    <dbReference type="NCBI Taxonomy" id="246195"/>
    <lineage>
        <taxon>Bacteria</taxon>
        <taxon>Pseudomonadati</taxon>
        <taxon>Pseudomonadota</taxon>
        <taxon>Gammaproteobacteria</taxon>
        <taxon>Cardiobacteriales</taxon>
        <taxon>Cardiobacteriaceae</taxon>
        <taxon>Dichelobacter</taxon>
    </lineage>
</organism>
<keyword id="KW-0067">ATP-binding</keyword>
<keyword id="KW-0963">Cytoplasm</keyword>
<keyword id="KW-1015">Disulfide bond</keyword>
<keyword id="KW-0547">Nucleotide-binding</keyword>
<keyword id="KW-1185">Reference proteome</keyword>
<keyword id="KW-0694">RNA-binding</keyword>
<keyword id="KW-0808">Transferase</keyword>
<keyword id="KW-0819">tRNA processing</keyword>
<keyword id="KW-0820">tRNA-binding</keyword>
<accession>A5EVB4</accession>